<accession>Q03LI0</accession>
<keyword id="KW-0963">Cytoplasm</keyword>
<keyword id="KW-0324">Glycolysis</keyword>
<keyword id="KW-0456">Lyase</keyword>
<keyword id="KW-0460">Magnesium</keyword>
<keyword id="KW-0479">Metal-binding</keyword>
<keyword id="KW-0964">Secreted</keyword>
<name>ENO_STRTD</name>
<reference key="1">
    <citation type="journal article" date="2006" name="Proc. Natl. Acad. Sci. U.S.A.">
        <title>Comparative genomics of the lactic acid bacteria.</title>
        <authorList>
            <person name="Makarova K.S."/>
            <person name="Slesarev A."/>
            <person name="Wolf Y.I."/>
            <person name="Sorokin A."/>
            <person name="Mirkin B."/>
            <person name="Koonin E.V."/>
            <person name="Pavlov A."/>
            <person name="Pavlova N."/>
            <person name="Karamychev V."/>
            <person name="Polouchine N."/>
            <person name="Shakhova V."/>
            <person name="Grigoriev I."/>
            <person name="Lou Y."/>
            <person name="Rohksar D."/>
            <person name="Lucas S."/>
            <person name="Huang K."/>
            <person name="Goodstein D.M."/>
            <person name="Hawkins T."/>
            <person name="Plengvidhya V."/>
            <person name="Welker D."/>
            <person name="Hughes J."/>
            <person name="Goh Y."/>
            <person name="Benson A."/>
            <person name="Baldwin K."/>
            <person name="Lee J.-H."/>
            <person name="Diaz-Muniz I."/>
            <person name="Dosti B."/>
            <person name="Smeianov V."/>
            <person name="Wechter W."/>
            <person name="Barabote R."/>
            <person name="Lorca G."/>
            <person name="Altermann E."/>
            <person name="Barrangou R."/>
            <person name="Ganesan B."/>
            <person name="Xie Y."/>
            <person name="Rawsthorne H."/>
            <person name="Tamir D."/>
            <person name="Parker C."/>
            <person name="Breidt F."/>
            <person name="Broadbent J.R."/>
            <person name="Hutkins R."/>
            <person name="O'Sullivan D."/>
            <person name="Steele J."/>
            <person name="Unlu G."/>
            <person name="Saier M.H. Jr."/>
            <person name="Klaenhammer T."/>
            <person name="Richardson P."/>
            <person name="Kozyavkin S."/>
            <person name="Weimer B.C."/>
            <person name="Mills D.A."/>
        </authorList>
    </citation>
    <scope>NUCLEOTIDE SEQUENCE [LARGE SCALE GENOMIC DNA]</scope>
    <source>
        <strain>ATCC BAA-491 / LMD-9</strain>
    </source>
</reference>
<comment type="function">
    <text evidence="1">Catalyzes the reversible conversion of 2-phosphoglycerate (2-PG) into phosphoenolpyruvate (PEP). It is essential for the degradation of carbohydrates via glycolysis.</text>
</comment>
<comment type="catalytic activity">
    <reaction evidence="1">
        <text>(2R)-2-phosphoglycerate = phosphoenolpyruvate + H2O</text>
        <dbReference type="Rhea" id="RHEA:10164"/>
        <dbReference type="ChEBI" id="CHEBI:15377"/>
        <dbReference type="ChEBI" id="CHEBI:58289"/>
        <dbReference type="ChEBI" id="CHEBI:58702"/>
        <dbReference type="EC" id="4.2.1.11"/>
    </reaction>
</comment>
<comment type="cofactor">
    <cofactor evidence="1">
        <name>Mg(2+)</name>
        <dbReference type="ChEBI" id="CHEBI:18420"/>
    </cofactor>
    <text evidence="1">Binds a second Mg(2+) ion via substrate during catalysis.</text>
</comment>
<comment type="pathway">
    <text evidence="1">Carbohydrate degradation; glycolysis; pyruvate from D-glyceraldehyde 3-phosphate: step 4/5.</text>
</comment>
<comment type="subcellular location">
    <subcellularLocation>
        <location evidence="1">Cytoplasm</location>
    </subcellularLocation>
    <subcellularLocation>
        <location evidence="1">Secreted</location>
    </subcellularLocation>
    <subcellularLocation>
        <location evidence="1">Cell surface</location>
    </subcellularLocation>
    <text evidence="1">Fractions of enolase are present in both the cytoplasm and on the cell surface.</text>
</comment>
<comment type="similarity">
    <text evidence="1">Belongs to the enolase family.</text>
</comment>
<feature type="chain" id="PRO_0000280880" description="Enolase">
    <location>
        <begin position="1"/>
        <end position="434"/>
    </location>
</feature>
<feature type="active site" description="Proton donor" evidence="1">
    <location>
        <position position="205"/>
    </location>
</feature>
<feature type="active site" description="Proton acceptor" evidence="1">
    <location>
        <position position="343"/>
    </location>
</feature>
<feature type="binding site" evidence="1">
    <location>
        <position position="163"/>
    </location>
    <ligand>
        <name>(2R)-2-phosphoglycerate</name>
        <dbReference type="ChEBI" id="CHEBI:58289"/>
    </ligand>
</feature>
<feature type="binding site" evidence="1">
    <location>
        <position position="242"/>
    </location>
    <ligand>
        <name>Mg(2+)</name>
        <dbReference type="ChEBI" id="CHEBI:18420"/>
    </ligand>
</feature>
<feature type="binding site" evidence="1">
    <location>
        <position position="291"/>
    </location>
    <ligand>
        <name>Mg(2+)</name>
        <dbReference type="ChEBI" id="CHEBI:18420"/>
    </ligand>
</feature>
<feature type="binding site" evidence="1">
    <location>
        <position position="318"/>
    </location>
    <ligand>
        <name>Mg(2+)</name>
        <dbReference type="ChEBI" id="CHEBI:18420"/>
    </ligand>
</feature>
<feature type="binding site" evidence="1">
    <location>
        <position position="343"/>
    </location>
    <ligand>
        <name>(2R)-2-phosphoglycerate</name>
        <dbReference type="ChEBI" id="CHEBI:58289"/>
    </ligand>
</feature>
<feature type="binding site" evidence="1">
    <location>
        <position position="372"/>
    </location>
    <ligand>
        <name>(2R)-2-phosphoglycerate</name>
        <dbReference type="ChEBI" id="CHEBI:58289"/>
    </ligand>
</feature>
<feature type="binding site" evidence="1">
    <location>
        <position position="373"/>
    </location>
    <ligand>
        <name>(2R)-2-phosphoglycerate</name>
        <dbReference type="ChEBI" id="CHEBI:58289"/>
    </ligand>
</feature>
<feature type="binding site" evidence="1">
    <location>
        <position position="394"/>
    </location>
    <ligand>
        <name>(2R)-2-phosphoglycerate</name>
        <dbReference type="ChEBI" id="CHEBI:58289"/>
    </ligand>
</feature>
<dbReference type="EC" id="4.2.1.11" evidence="1"/>
<dbReference type="EMBL" id="CP000419">
    <property type="protein sequence ID" value="ABJ65942.1"/>
    <property type="molecule type" value="Genomic_DNA"/>
</dbReference>
<dbReference type="RefSeq" id="WP_011680939.1">
    <property type="nucleotide sequence ID" value="NC_008532.1"/>
</dbReference>
<dbReference type="SMR" id="Q03LI0"/>
<dbReference type="KEGG" id="ste:STER_0684"/>
<dbReference type="HOGENOM" id="CLU_031223_2_1_9"/>
<dbReference type="UniPathway" id="UPA00109">
    <property type="reaction ID" value="UER00187"/>
</dbReference>
<dbReference type="GO" id="GO:0009986">
    <property type="term" value="C:cell surface"/>
    <property type="evidence" value="ECO:0007669"/>
    <property type="project" value="UniProtKB-SubCell"/>
</dbReference>
<dbReference type="GO" id="GO:0005576">
    <property type="term" value="C:extracellular region"/>
    <property type="evidence" value="ECO:0007669"/>
    <property type="project" value="UniProtKB-SubCell"/>
</dbReference>
<dbReference type="GO" id="GO:0009274">
    <property type="term" value="C:peptidoglycan-based cell wall"/>
    <property type="evidence" value="ECO:0007669"/>
    <property type="project" value="UniProtKB-ARBA"/>
</dbReference>
<dbReference type="GO" id="GO:0000015">
    <property type="term" value="C:phosphopyruvate hydratase complex"/>
    <property type="evidence" value="ECO:0007669"/>
    <property type="project" value="InterPro"/>
</dbReference>
<dbReference type="GO" id="GO:0000287">
    <property type="term" value="F:magnesium ion binding"/>
    <property type="evidence" value="ECO:0007669"/>
    <property type="project" value="UniProtKB-UniRule"/>
</dbReference>
<dbReference type="GO" id="GO:0004634">
    <property type="term" value="F:phosphopyruvate hydratase activity"/>
    <property type="evidence" value="ECO:0007669"/>
    <property type="project" value="UniProtKB-UniRule"/>
</dbReference>
<dbReference type="GO" id="GO:0006096">
    <property type="term" value="P:glycolytic process"/>
    <property type="evidence" value="ECO:0007669"/>
    <property type="project" value="UniProtKB-UniRule"/>
</dbReference>
<dbReference type="CDD" id="cd03313">
    <property type="entry name" value="enolase"/>
    <property type="match status" value="1"/>
</dbReference>
<dbReference type="FunFam" id="3.20.20.120:FF:000001">
    <property type="entry name" value="Enolase"/>
    <property type="match status" value="1"/>
</dbReference>
<dbReference type="FunFam" id="3.30.390.10:FF:000001">
    <property type="entry name" value="Enolase"/>
    <property type="match status" value="1"/>
</dbReference>
<dbReference type="Gene3D" id="3.20.20.120">
    <property type="entry name" value="Enolase-like C-terminal domain"/>
    <property type="match status" value="1"/>
</dbReference>
<dbReference type="Gene3D" id="3.30.390.10">
    <property type="entry name" value="Enolase-like, N-terminal domain"/>
    <property type="match status" value="1"/>
</dbReference>
<dbReference type="HAMAP" id="MF_00318">
    <property type="entry name" value="Enolase"/>
    <property type="match status" value="1"/>
</dbReference>
<dbReference type="InterPro" id="IPR000941">
    <property type="entry name" value="Enolase"/>
</dbReference>
<dbReference type="InterPro" id="IPR036849">
    <property type="entry name" value="Enolase-like_C_sf"/>
</dbReference>
<dbReference type="InterPro" id="IPR029017">
    <property type="entry name" value="Enolase-like_N"/>
</dbReference>
<dbReference type="InterPro" id="IPR020810">
    <property type="entry name" value="Enolase_C"/>
</dbReference>
<dbReference type="InterPro" id="IPR020809">
    <property type="entry name" value="Enolase_CS"/>
</dbReference>
<dbReference type="InterPro" id="IPR020811">
    <property type="entry name" value="Enolase_N"/>
</dbReference>
<dbReference type="NCBIfam" id="TIGR01060">
    <property type="entry name" value="eno"/>
    <property type="match status" value="1"/>
</dbReference>
<dbReference type="PANTHER" id="PTHR11902">
    <property type="entry name" value="ENOLASE"/>
    <property type="match status" value="1"/>
</dbReference>
<dbReference type="PANTHER" id="PTHR11902:SF1">
    <property type="entry name" value="ENOLASE"/>
    <property type="match status" value="1"/>
</dbReference>
<dbReference type="Pfam" id="PF00113">
    <property type="entry name" value="Enolase_C"/>
    <property type="match status" value="1"/>
</dbReference>
<dbReference type="Pfam" id="PF03952">
    <property type="entry name" value="Enolase_N"/>
    <property type="match status" value="1"/>
</dbReference>
<dbReference type="PIRSF" id="PIRSF001400">
    <property type="entry name" value="Enolase"/>
    <property type="match status" value="1"/>
</dbReference>
<dbReference type="PRINTS" id="PR00148">
    <property type="entry name" value="ENOLASE"/>
</dbReference>
<dbReference type="SFLD" id="SFLDS00001">
    <property type="entry name" value="Enolase"/>
    <property type="match status" value="1"/>
</dbReference>
<dbReference type="SFLD" id="SFLDF00002">
    <property type="entry name" value="enolase"/>
    <property type="match status" value="1"/>
</dbReference>
<dbReference type="SMART" id="SM01192">
    <property type="entry name" value="Enolase_C"/>
    <property type="match status" value="1"/>
</dbReference>
<dbReference type="SMART" id="SM01193">
    <property type="entry name" value="Enolase_N"/>
    <property type="match status" value="1"/>
</dbReference>
<dbReference type="SUPFAM" id="SSF51604">
    <property type="entry name" value="Enolase C-terminal domain-like"/>
    <property type="match status" value="1"/>
</dbReference>
<dbReference type="SUPFAM" id="SSF54826">
    <property type="entry name" value="Enolase N-terminal domain-like"/>
    <property type="match status" value="1"/>
</dbReference>
<dbReference type="PROSITE" id="PS00164">
    <property type="entry name" value="ENOLASE"/>
    <property type="match status" value="1"/>
</dbReference>
<gene>
    <name evidence="1" type="primary">eno</name>
    <name type="ordered locus">STER_0684</name>
</gene>
<evidence type="ECO:0000255" key="1">
    <source>
        <dbReference type="HAMAP-Rule" id="MF_00318"/>
    </source>
</evidence>
<protein>
    <recommendedName>
        <fullName evidence="1">Enolase</fullName>
        <ecNumber evidence="1">4.2.1.11</ecNumber>
    </recommendedName>
    <alternativeName>
        <fullName evidence="1">2-phospho-D-glycerate hydro-lyase</fullName>
    </alternativeName>
    <alternativeName>
        <fullName evidence="1">2-phosphoglycerate dehydratase</fullName>
    </alternativeName>
</protein>
<proteinExistence type="inferred from homology"/>
<sequence>MSIITDVYAREVLDSRGNPTLEVEVYTESGAFGRGMVPSGASTGEHEAVELRDGDKARYGGLGTQKAVDNVNNVIAEHIIGFDVRDQQGIDRAMIALDGTPNKGKLGANAILGVSIAVARAAADYLEVPLYSYLGGFNTKVLPTPMMNIINGGSHSDAPIAFQEFMIVPAGAPTFKEALRWGAEIFHALKKILKERGLETAVGDEGGFAPRFNGTEDGVETIIKAIEAAGYVPGKDVFIGLDCASSEFYDAERKVYDYTKFEGEGAAVRTAAEQIDYLEELVNKYPIITIEDGMDENDWDGWKALTERLGGKVQLVGDDFFVTNTAYLEKGIAEHAANSILIKVNQIGTLTETFDAIEMAKEAGYTAVVSHRSGETEDSTIADIAVATNAGQIKTGSLSRTDRIAKYNQLLRIEDQLGEVAEYRGLKSFYNLKK</sequence>
<organism>
    <name type="scientific">Streptococcus thermophilus (strain ATCC BAA-491 / LMD-9)</name>
    <dbReference type="NCBI Taxonomy" id="322159"/>
    <lineage>
        <taxon>Bacteria</taxon>
        <taxon>Bacillati</taxon>
        <taxon>Bacillota</taxon>
        <taxon>Bacilli</taxon>
        <taxon>Lactobacillales</taxon>
        <taxon>Streptococcaceae</taxon>
        <taxon>Streptococcus</taxon>
    </lineage>
</organism>